<protein>
    <recommendedName>
        <fullName>Cytochrome c oxidase subunit 7B, mitochondrial</fullName>
    </recommendedName>
    <alternativeName>
        <fullName>Cytochrome c oxidase polypeptide VIIb</fullName>
    </alternativeName>
</protein>
<comment type="function">
    <text evidence="1 2">Component of the cytochrome c oxidase, the last enzyme in the mitochondrial electron transport chain which drives oxidative phosphorylation. The respiratory chain contains 3 multisubunit complexes succinate dehydrogenase (complex II, CII), ubiquinol-cytochrome c oxidoreductase (cytochrome b-c1 complex, complex III, CIII) and cytochrome c oxidase (complex IV, CIV), that cooperate to transfer electrons derived from NADH and succinate to molecular oxygen, creating an electrochemical gradient over the inner membrane that drives transmembrane transport and the ATP synthase. Cytochrome c oxidase is the component of the respiratory chain that catalyzes the reduction of oxygen to water. Electrons originating from reduced cytochrome c in the intermembrane space (IMS) are transferred via the dinuclear copper A center (CU(A)) of subunit 2 and heme A of subunit 1 to the active site in subunit 1, a binuclear center (BNC) formed by heme A3 and copper B (CU(B)). The BNC reduces molecular oxygen to 2 water molecules using 4 electrons from cytochrome c in the IMS and 4 protons from the mitochondrial matrix (By similarity). Plays a role in proper central nervous system (CNS) development in vertebrates (By similarity).</text>
</comment>
<comment type="pathway">
    <text evidence="1">Energy metabolism; oxidative phosphorylation.</text>
</comment>
<comment type="subunit">
    <text evidence="1">Component of the cytochrome c oxidase (complex IV, CIV), a multisubunit enzyme composed of 14 subunits. The complex is composed of a catalytic core of 3 subunits MT-CO1, MT-CO2 and MT-CO3, encoded in the mitochondrial DNA, and 11 supernumerary subunits COX4I, COX5A, COX5B, COX6A, COX6B, COX6C, COX7A, COX7B, COX7C, COX8 and NDUFA4, which are encoded in the nuclear genome. The complex exists as a monomer or a dimer and forms supercomplexes (SCs) in the inner mitochondrial membrane with NADH-ubiquinone oxidoreductase (complex I, CI) and ubiquinol-cytochrome c oxidoreductase (cytochrome b-c1 complex, complex III, CIII), resulting in different assemblies (supercomplex SCI(1)III(2)IV(1) and megacomplex MCI(2)III(2)IV(2)).</text>
</comment>
<comment type="subcellular location">
    <subcellularLocation>
        <location evidence="1">Mitochondrion inner membrane</location>
        <topology evidence="1">Single-pass membrane protein</topology>
    </subcellularLocation>
</comment>
<comment type="similarity">
    <text evidence="3">Belongs to the cytochrome c oxidase VIIb family.</text>
</comment>
<proteinExistence type="inferred from homology"/>
<keyword id="KW-0472">Membrane</keyword>
<keyword id="KW-0496">Mitochondrion</keyword>
<keyword id="KW-0999">Mitochondrion inner membrane</keyword>
<keyword id="KW-1185">Reference proteome</keyword>
<keyword id="KW-0809">Transit peptide</keyword>
<keyword id="KW-0812">Transmembrane</keyword>
<keyword id="KW-1133">Transmembrane helix</keyword>
<evidence type="ECO:0000250" key="1">
    <source>
        <dbReference type="UniProtKB" id="P13183"/>
    </source>
</evidence>
<evidence type="ECO:0000250" key="2">
    <source>
        <dbReference type="UniProtKB" id="P24311"/>
    </source>
</evidence>
<evidence type="ECO:0000305" key="3"/>
<name>COX7B_PONAB</name>
<feature type="transit peptide" description="Mitochondrion" evidence="1">
    <location>
        <begin position="1"/>
        <end position="24"/>
    </location>
</feature>
<feature type="chain" id="PRO_0000041876" description="Cytochrome c oxidase subunit 7B, mitochondrial">
    <location>
        <begin position="25"/>
        <end position="80"/>
    </location>
</feature>
<feature type="topological domain" description="Mitochondrial matrix" evidence="1">
    <location>
        <begin position="25"/>
        <end position="32"/>
    </location>
</feature>
<feature type="transmembrane region" description="Helical" evidence="1">
    <location>
        <begin position="33"/>
        <end position="59"/>
    </location>
</feature>
<feature type="topological domain" description="Mitochondrial intermembrane" evidence="1">
    <location>
        <begin position="60"/>
        <end position="80"/>
    </location>
</feature>
<gene>
    <name type="primary">COX7B</name>
</gene>
<accession>Q5R9K2</accession>
<dbReference type="EMBL" id="CR859385">
    <property type="protein sequence ID" value="CAH91558.1"/>
    <property type="molecule type" value="mRNA"/>
</dbReference>
<dbReference type="RefSeq" id="NP_001125916.1">
    <property type="nucleotide sequence ID" value="NM_001132444.1"/>
</dbReference>
<dbReference type="SMR" id="Q5R9K2"/>
<dbReference type="FunCoup" id="Q5R9K2">
    <property type="interactions" value="300"/>
</dbReference>
<dbReference type="STRING" id="9601.ENSPPYP00000022941"/>
<dbReference type="Ensembl" id="ENSPPYT00000023908.2">
    <property type="protein sequence ID" value="ENSPPYP00000022941.1"/>
    <property type="gene ID" value="ENSPPYG00000020494.2"/>
</dbReference>
<dbReference type="GeneID" id="100172849"/>
<dbReference type="KEGG" id="pon:100172849"/>
<dbReference type="CTD" id="1349"/>
<dbReference type="eggNOG" id="ENOG502S9DG">
    <property type="taxonomic scope" value="Eukaryota"/>
</dbReference>
<dbReference type="GeneTree" id="ENSGT00390000012178"/>
<dbReference type="HOGENOM" id="CLU_172656_0_0_1"/>
<dbReference type="InParanoid" id="Q5R9K2"/>
<dbReference type="OMA" id="MWTYVAT"/>
<dbReference type="OrthoDB" id="9937520at2759"/>
<dbReference type="TreeFam" id="TF105068"/>
<dbReference type="UniPathway" id="UPA00705"/>
<dbReference type="Proteomes" id="UP000001595">
    <property type="component" value="Chromosome X"/>
</dbReference>
<dbReference type="GO" id="GO:0005743">
    <property type="term" value="C:mitochondrial inner membrane"/>
    <property type="evidence" value="ECO:0007669"/>
    <property type="project" value="UniProtKB-SubCell"/>
</dbReference>
<dbReference type="GO" id="GO:0045277">
    <property type="term" value="C:respiratory chain complex IV"/>
    <property type="evidence" value="ECO:0007669"/>
    <property type="project" value="TreeGrafter"/>
</dbReference>
<dbReference type="GO" id="GO:0007417">
    <property type="term" value="P:central nervous system development"/>
    <property type="evidence" value="ECO:0000250"/>
    <property type="project" value="UniProtKB"/>
</dbReference>
<dbReference type="GO" id="GO:0006123">
    <property type="term" value="P:mitochondrial electron transport, cytochrome c to oxygen"/>
    <property type="evidence" value="ECO:0007669"/>
    <property type="project" value="InterPro"/>
</dbReference>
<dbReference type="CDD" id="cd01403">
    <property type="entry name" value="Cyt_c_Oxidase_VIIb"/>
    <property type="match status" value="1"/>
</dbReference>
<dbReference type="FunFam" id="4.10.51.10:FF:000001">
    <property type="entry name" value="Cytochrome c oxidase subunit 7B, mitochondrial"/>
    <property type="match status" value="1"/>
</dbReference>
<dbReference type="Gene3D" id="4.10.51.10">
    <property type="entry name" value="Cytochrome C Oxidase, chain K"/>
    <property type="match status" value="1"/>
</dbReference>
<dbReference type="InterPro" id="IPR008433">
    <property type="entry name" value="Cyt_c_oxidase_suVIIB"/>
</dbReference>
<dbReference type="InterPro" id="IPR023272">
    <property type="entry name" value="Cyt_c_oxidase_suVIIB_dom_sf"/>
</dbReference>
<dbReference type="PANTHER" id="PTHR16716">
    <property type="entry name" value="CYTOCHROME C OXIDASE SUBUNIT 7B, MITOCHONDRIAL"/>
    <property type="match status" value="1"/>
</dbReference>
<dbReference type="PANTHER" id="PTHR16716:SF0">
    <property type="entry name" value="CYTOCHROME C OXIDASE SUBUNIT 7B, MITOCHONDRIAL"/>
    <property type="match status" value="1"/>
</dbReference>
<dbReference type="Pfam" id="PF05392">
    <property type="entry name" value="COX7B"/>
    <property type="match status" value="1"/>
</dbReference>
<dbReference type="SUPFAM" id="SSF81423">
    <property type="entry name" value="Mitochondrial cytochrome c oxidase subunit VIIb"/>
    <property type="match status" value="1"/>
</dbReference>
<sequence>MFPLVKNALNRLQVRSIQQTMARQSHQKRTPDFHDKYGNAVLASGATFCIVTWTYVATQVGIEWNLSPVGRVTPKEWRNQ</sequence>
<organism>
    <name type="scientific">Pongo abelii</name>
    <name type="common">Sumatran orangutan</name>
    <name type="synonym">Pongo pygmaeus abelii</name>
    <dbReference type="NCBI Taxonomy" id="9601"/>
    <lineage>
        <taxon>Eukaryota</taxon>
        <taxon>Metazoa</taxon>
        <taxon>Chordata</taxon>
        <taxon>Craniata</taxon>
        <taxon>Vertebrata</taxon>
        <taxon>Euteleostomi</taxon>
        <taxon>Mammalia</taxon>
        <taxon>Eutheria</taxon>
        <taxon>Euarchontoglires</taxon>
        <taxon>Primates</taxon>
        <taxon>Haplorrhini</taxon>
        <taxon>Catarrhini</taxon>
        <taxon>Hominidae</taxon>
        <taxon>Pongo</taxon>
    </lineage>
</organism>
<reference key="1">
    <citation type="submission" date="2004-11" db="EMBL/GenBank/DDBJ databases">
        <authorList>
            <consortium name="The German cDNA consortium"/>
        </authorList>
    </citation>
    <scope>NUCLEOTIDE SEQUENCE [LARGE SCALE MRNA]</scope>
    <source>
        <tissue>Heart</tissue>
    </source>
</reference>